<dbReference type="EMBL" id="Z48756">
    <property type="protein sequence ID" value="CAA88651.1"/>
    <property type="molecule type" value="Genomic_DNA"/>
</dbReference>
<dbReference type="EMBL" id="BK006946">
    <property type="protein sequence ID" value="DAA10141.1"/>
    <property type="molecule type" value="Genomic_DNA"/>
</dbReference>
<dbReference type="PIR" id="S56055">
    <property type="entry name" value="S56055"/>
</dbReference>
<dbReference type="RefSeq" id="NP_013968.1">
    <property type="nucleotide sequence ID" value="NM_001182748.1"/>
</dbReference>
<dbReference type="SMR" id="Q04013"/>
<dbReference type="BioGRID" id="35420">
    <property type="interactions" value="200"/>
</dbReference>
<dbReference type="DIP" id="DIP-6370N"/>
<dbReference type="FunCoup" id="Q04013">
    <property type="interactions" value="238"/>
</dbReference>
<dbReference type="IntAct" id="Q04013">
    <property type="interactions" value="23"/>
</dbReference>
<dbReference type="MINT" id="Q04013"/>
<dbReference type="STRING" id="4932.YMR241W"/>
<dbReference type="TCDB" id="2.A.29.29.1">
    <property type="family name" value="the mitochondrial carrier (mc) family"/>
</dbReference>
<dbReference type="GlyGen" id="Q04013">
    <property type="glycosylation" value="1 site"/>
</dbReference>
<dbReference type="iPTMnet" id="Q04013"/>
<dbReference type="PaxDb" id="4932-YMR241W"/>
<dbReference type="PeptideAtlas" id="Q04013"/>
<dbReference type="EnsemblFungi" id="YMR241W_mRNA">
    <property type="protein sequence ID" value="YMR241W"/>
    <property type="gene ID" value="YMR241W"/>
</dbReference>
<dbReference type="GeneID" id="855282"/>
<dbReference type="KEGG" id="sce:YMR241W"/>
<dbReference type="AGR" id="SGD:S000004854"/>
<dbReference type="SGD" id="S000004854">
    <property type="gene designation" value="YHM2"/>
</dbReference>
<dbReference type="VEuPathDB" id="FungiDB:YMR241W"/>
<dbReference type="eggNOG" id="KOG0756">
    <property type="taxonomic scope" value="Eukaryota"/>
</dbReference>
<dbReference type="HOGENOM" id="CLU_052717_0_0_1"/>
<dbReference type="InParanoid" id="Q04013"/>
<dbReference type="OMA" id="VMGPCTY"/>
<dbReference type="OrthoDB" id="10253709at2759"/>
<dbReference type="BioCyc" id="YEAST:G3O-32921-MONOMER"/>
<dbReference type="BioGRID-ORCS" id="855282">
    <property type="hits" value="0 hits in 10 CRISPR screens"/>
</dbReference>
<dbReference type="PRO" id="PR:Q04013"/>
<dbReference type="Proteomes" id="UP000002311">
    <property type="component" value="Chromosome XIII"/>
</dbReference>
<dbReference type="RNAct" id="Q04013">
    <property type="molecule type" value="protein"/>
</dbReference>
<dbReference type="GO" id="GO:0005743">
    <property type="term" value="C:mitochondrial inner membrane"/>
    <property type="evidence" value="ECO:0007669"/>
    <property type="project" value="UniProtKB-SubCell"/>
</dbReference>
<dbReference type="GO" id="GO:0042645">
    <property type="term" value="C:mitochondrial nucleoid"/>
    <property type="evidence" value="ECO:0000314"/>
    <property type="project" value="SGD"/>
</dbReference>
<dbReference type="GO" id="GO:0005739">
    <property type="term" value="C:mitochondrion"/>
    <property type="evidence" value="ECO:0000314"/>
    <property type="project" value="SGD"/>
</dbReference>
<dbReference type="GO" id="GO:0003677">
    <property type="term" value="F:DNA binding"/>
    <property type="evidence" value="ECO:0000314"/>
    <property type="project" value="SGD"/>
</dbReference>
<dbReference type="GO" id="GO:0015742">
    <property type="term" value="P:alpha-ketoglutarate transport"/>
    <property type="evidence" value="ECO:0000314"/>
    <property type="project" value="SGD"/>
</dbReference>
<dbReference type="GO" id="GO:0006843">
    <property type="term" value="P:mitochondrial citrate transmembrane transport"/>
    <property type="evidence" value="ECO:0000314"/>
    <property type="project" value="SGD"/>
</dbReference>
<dbReference type="GO" id="GO:0000002">
    <property type="term" value="P:mitochondrial genome maintenance"/>
    <property type="evidence" value="ECO:0000315"/>
    <property type="project" value="SGD"/>
</dbReference>
<dbReference type="GO" id="GO:0006842">
    <property type="term" value="P:tricarboxylic acid transport"/>
    <property type="evidence" value="ECO:0000314"/>
    <property type="project" value="SGD"/>
</dbReference>
<dbReference type="FunFam" id="1.50.40.10:FF:000053">
    <property type="entry name" value="Mitochondrial DNA replication protein"/>
    <property type="match status" value="1"/>
</dbReference>
<dbReference type="FunFam" id="1.50.40.10:FF:000085">
    <property type="entry name" value="Tricarboxylate carrier, putative"/>
    <property type="match status" value="1"/>
</dbReference>
<dbReference type="Gene3D" id="1.50.40.10">
    <property type="entry name" value="Mitochondrial carrier domain"/>
    <property type="match status" value="2"/>
</dbReference>
<dbReference type="InterPro" id="IPR053017">
    <property type="entry name" value="Mito_Cit/Oxoglu_Carrier"/>
</dbReference>
<dbReference type="InterPro" id="IPR018108">
    <property type="entry name" value="Mitochondrial_sb/sol_carrier"/>
</dbReference>
<dbReference type="InterPro" id="IPR023395">
    <property type="entry name" value="Mt_carrier_dom_sf"/>
</dbReference>
<dbReference type="PANTHER" id="PTHR46982">
    <property type="entry name" value="CITRATE/OXOGLUTARATE CARRIER PROTEIN"/>
    <property type="match status" value="1"/>
</dbReference>
<dbReference type="PANTHER" id="PTHR46982:SF1">
    <property type="entry name" value="CITRATE_OXOGLUTARATE CARRIER PROTEIN"/>
    <property type="match status" value="1"/>
</dbReference>
<dbReference type="Pfam" id="PF00153">
    <property type="entry name" value="Mito_carr"/>
    <property type="match status" value="3"/>
</dbReference>
<dbReference type="SUPFAM" id="SSF103506">
    <property type="entry name" value="Mitochondrial carrier"/>
    <property type="match status" value="1"/>
</dbReference>
<dbReference type="PROSITE" id="PS50920">
    <property type="entry name" value="SOLCAR"/>
    <property type="match status" value="3"/>
</dbReference>
<keyword id="KW-0238">DNA-binding</keyword>
<keyword id="KW-0472">Membrane</keyword>
<keyword id="KW-0496">Mitochondrion</keyword>
<keyword id="KW-0999">Mitochondrion inner membrane</keyword>
<keyword id="KW-1135">Mitochondrion nucleoid</keyword>
<keyword id="KW-1185">Reference proteome</keyword>
<keyword id="KW-0677">Repeat</keyword>
<keyword id="KW-0812">Transmembrane</keyword>
<keyword id="KW-1133">Transmembrane helix</keyword>
<keyword id="KW-0813">Transport</keyword>
<organism>
    <name type="scientific">Saccharomyces cerevisiae (strain ATCC 204508 / S288c)</name>
    <name type="common">Baker's yeast</name>
    <dbReference type="NCBI Taxonomy" id="559292"/>
    <lineage>
        <taxon>Eukaryota</taxon>
        <taxon>Fungi</taxon>
        <taxon>Dikarya</taxon>
        <taxon>Ascomycota</taxon>
        <taxon>Saccharomycotina</taxon>
        <taxon>Saccharomycetes</taxon>
        <taxon>Saccharomycetales</taxon>
        <taxon>Saccharomycetaceae</taxon>
        <taxon>Saccharomyces</taxon>
    </lineage>
</organism>
<comment type="function">
    <text evidence="6 7">Mitochondrial antiporter which catalyzes the transport of citrate and oxoglutarate across the membrane. Also shows specificity for oxaloacetate, and to a lesser extent succinate and fumarate. Transports isocitrate, cis-aconitate and L-malate with very low efficiency. Does not show uniporter activity. Helps to maintain normal citrate levels and NADPH/NADP(+) ratios under conditions of oxidative stress. In addition, associates with the mitochondrial nucleoid and binds DNA in vitro, although the relevance of these data in vivo is unclear.</text>
</comment>
<comment type="activity regulation">
    <text evidence="6">Strongly inhibited by mersalyl, p-chloromercuribenzenesulfonate, mercuric chloride, N-ethylmaleimide, pyridoxal 5'-phosphate, bathophenanthroline, and tannic acid. Partially inhibited by alpha-cyanocinnamate and bromescol purple. Weakly inhibited by butylmalonate and phenylsuccinate. Not inhibited by 1,2,3-benzenetricarboxylate or carboxyatractyloside.</text>
</comment>
<comment type="biophysicochemical properties">
    <kinetics>
        <KM evidence="6">0.16 mM for citrate (with purified protein reconstituted into proteoliposomes)</KM>
        <KM evidence="6">1.2 mM for oxoglutarate (with purified protein reconstituted into proteoliposomes)</KM>
        <Vmax evidence="6">9.8 mmol/min/g enzyme for [14C]citrate/citrate and [14C]citrate/oxoglutarate exchange (with purified protein reconstituted into proteoliposomes)</Vmax>
        <Vmax evidence="6">10.3 mmol/min/g enzyme for [14C]oxoglutarate/oxoglutarate and [14C]oxoglutarate/citrate exchange (with purified protein reconstituted into proteoliposomes)</Vmax>
    </kinetics>
</comment>
<comment type="subcellular location">
    <subcellularLocation>
        <location evidence="3 5 6 7">Mitochondrion inner membrane</location>
        <topology evidence="3 5 6 7">Multi-pass membrane protein</topology>
    </subcellularLocation>
    <subcellularLocation>
        <location evidence="7">Mitochondrion matrix</location>
        <location evidence="7">Mitochondrion nucleoid</location>
    </subcellularLocation>
</comment>
<comment type="disruption phenotype">
    <text evidence="6 7">Shows slow growth and respiration defects in minimal medium. Shows growth defects in acetate-supplemented medium; the phenotype is enhanced by addition of hydrogen peroxide (increased oxidative stress) and/or double knockout of YHM2 and ZWF1. The cytosolic NADPH/NADP(+) ratio is decreased compared to wild type; this effect is enhanced in the presence of hydrogen peroxide. The mitochondrial NADPH/NADP(+) ratio is increased, but only in the presence of hydrogen peroxide. Levels of cytosolic citrate are reduced, but only in the presence of hydrogen peroxide. Levels of cytosolic oxoglutarate are reduced, but only in the presence of hydrogen peroxide; the effect is enhanced by double knockout of YHM2 and ZWF1. Cells show a very small increase in levels of reactive oxygen species (ROS) following hydrogen peroxide treatment; in double knockouts of YHM2 and ZWF1 there is a large increase in ROS. Overexpression suppresses the temperature-sensitive growth defect of ABF2 in glucose-rich medium.</text>
</comment>
<comment type="miscellaneous">
    <text evidence="4">Present with 2930 molecules/cell in log phase SD medium.</text>
</comment>
<comment type="similarity">
    <text evidence="10">Belongs to the mitochondrial carrier (TC 2.A.29) family.</text>
</comment>
<comment type="caution">
    <text evidence="9">Was originally proposed to function in mitochondrial DNA replication and maintenance.</text>
</comment>
<sequence length="314" mass="34185">MPSTTNTAAANVIEKKPVSFSNILLGACLNLSEVTTLGQPLEVVKTTMAANRNFTFLESVKHVWSRGGILGYYQGLIPWAWIEASTKGAVLLFVSAEAEYRFKSLGLNNFASGILGGVTGGVTQAYLTMGFCTCMKTVEITRHKSASAGGVPQSSWSVFKNIYKKEGIRGINKGVNAVAIRQMTNWGSRFGLSRLVEDGIRKITGKTNKDDKLNPFEKIGASALGGGLSAWNQPIEVIRVEMQSKKEDPNRPKNLTVGKTFKYIYQSNGLKGLYRGVTPRIGLGIWQTVFMVGFGDMAKEFVARMTGETPVAKH</sequence>
<proteinExistence type="evidence at protein level"/>
<reference key="1">
    <citation type="journal article" date="1997" name="Nature">
        <title>The nucleotide sequence of Saccharomyces cerevisiae chromosome XIII.</title>
        <authorList>
            <person name="Bowman S."/>
            <person name="Churcher C.M."/>
            <person name="Badcock K."/>
            <person name="Brown D."/>
            <person name="Chillingworth T."/>
            <person name="Connor R."/>
            <person name="Dedman K."/>
            <person name="Devlin K."/>
            <person name="Gentles S."/>
            <person name="Hamlin N."/>
            <person name="Hunt S."/>
            <person name="Jagels K."/>
            <person name="Lye G."/>
            <person name="Moule S."/>
            <person name="Odell C."/>
            <person name="Pearson D."/>
            <person name="Rajandream M.A."/>
            <person name="Rice P."/>
            <person name="Skelton J."/>
            <person name="Walsh S.V."/>
            <person name="Whitehead S."/>
            <person name="Barrell B.G."/>
        </authorList>
    </citation>
    <scope>NUCLEOTIDE SEQUENCE [LARGE SCALE GENOMIC DNA]</scope>
    <source>
        <strain>ATCC 204508 / S288c</strain>
    </source>
</reference>
<reference key="2">
    <citation type="journal article" date="2014" name="G3 (Bethesda)">
        <title>The reference genome sequence of Saccharomyces cerevisiae: Then and now.</title>
        <authorList>
            <person name="Engel S.R."/>
            <person name="Dietrich F.S."/>
            <person name="Fisk D.G."/>
            <person name="Binkley G."/>
            <person name="Balakrishnan R."/>
            <person name="Costanzo M.C."/>
            <person name="Dwight S.S."/>
            <person name="Hitz B.C."/>
            <person name="Karra K."/>
            <person name="Nash R.S."/>
            <person name="Weng S."/>
            <person name="Wong E.D."/>
            <person name="Lloyd P."/>
            <person name="Skrzypek M.S."/>
            <person name="Miyasato S.R."/>
            <person name="Simison M."/>
            <person name="Cherry J.M."/>
        </authorList>
    </citation>
    <scope>GENOME REANNOTATION</scope>
    <source>
        <strain>ATCC 204508 / S288c</strain>
    </source>
</reference>
<reference evidence="10" key="3">
    <citation type="journal article" date="1998" name="Mol. Cell. Biol.">
        <title>A novel DNA-binding protein bound to the mitochondrial inner membrane restores the null mutation of mitochondrial histone Abf2p in Saccharomyces cerevisiae.</title>
        <authorList>
            <person name="Cho J.H."/>
            <person name="Ha S.J."/>
            <person name="Kao L.R."/>
            <person name="Megraw T.L."/>
            <person name="Chae C.-B."/>
        </authorList>
    </citation>
    <scope>SUBCELLULAR LOCATION</scope>
    <scope>DISRUPTION PHENOTYPE</scope>
    <scope>MUTAGENESIS OF 249-PRO--LYS-253</scope>
</reference>
<reference key="4">
    <citation type="journal article" date="2003" name="Nature">
        <title>Global analysis of protein localization in budding yeast.</title>
        <authorList>
            <person name="Huh W.-K."/>
            <person name="Falvo J.V."/>
            <person name="Gerke L.C."/>
            <person name="Carroll A.S."/>
            <person name="Howson R.W."/>
            <person name="Weissman J.S."/>
            <person name="O'Shea E.K."/>
        </authorList>
    </citation>
    <scope>SUBCELLULAR LOCATION [LARGE SCALE ANALYSIS]</scope>
</reference>
<reference key="5">
    <citation type="journal article" date="2003" name="Nature">
        <title>Global analysis of protein expression in yeast.</title>
        <authorList>
            <person name="Ghaemmaghami S."/>
            <person name="Huh W.-K."/>
            <person name="Bower K."/>
            <person name="Howson R.W."/>
            <person name="Belle A."/>
            <person name="Dephoure N."/>
            <person name="O'Shea E.K."/>
            <person name="Weissman J.S."/>
        </authorList>
    </citation>
    <scope>LEVEL OF PROTEIN EXPRESSION [LARGE SCALE ANALYSIS]</scope>
</reference>
<reference key="6">
    <citation type="journal article" date="2003" name="Proc. Natl. Acad. Sci. U.S.A.">
        <title>The proteome of Saccharomyces cerevisiae mitochondria.</title>
        <authorList>
            <person name="Sickmann A."/>
            <person name="Reinders J."/>
            <person name="Wagner Y."/>
            <person name="Joppich C."/>
            <person name="Zahedi R.P."/>
            <person name="Meyer H.E."/>
            <person name="Schoenfisch B."/>
            <person name="Perschil I."/>
            <person name="Chacinska A."/>
            <person name="Guiard B."/>
            <person name="Rehling P."/>
            <person name="Pfanner N."/>
            <person name="Meisinger C."/>
        </authorList>
    </citation>
    <scope>SUBCELLULAR LOCATION [LARGE SCALE ANALYSIS]</scope>
    <source>
        <strain>ATCC 76625 / YPH499</strain>
    </source>
</reference>
<reference key="7">
    <citation type="journal article" date="2010" name="J. Biol. Chem.">
        <title>Identification and functional characterization of a novel mitochondrial carrier for citrate and oxoglutarate in Saccharomyces cerevisiae.</title>
        <authorList>
            <person name="Castegna A."/>
            <person name="Scarcia P."/>
            <person name="Agrimi G."/>
            <person name="Palmieri L."/>
            <person name="Rottensteiner H."/>
            <person name="Spera I."/>
            <person name="Germinario L."/>
            <person name="Palmieri F."/>
        </authorList>
    </citation>
    <scope>FUNCTION</scope>
    <scope>ACTIVITY REGULATION</scope>
    <scope>BIOPHYSICOCHEMICAL PROPERTIES</scope>
    <scope>SUBCELLULAR LOCATION</scope>
    <scope>DISRUPTION PHENOTYPE</scope>
</reference>
<protein>
    <recommendedName>
        <fullName evidence="8">Citrate/oxoglutarate carrier protein</fullName>
        <shortName evidence="8">Coc1p</shortName>
    </recommendedName>
    <alternativeName>
        <fullName evidence="10">Mitochondrial DNA replication protein YHM2</fullName>
    </alternativeName>
</protein>
<gene>
    <name type="primary">YHM2</name>
    <name type="ordered locus">YMR241W</name>
    <name type="ORF">YM9408.03</name>
</gene>
<accession>Q04013</accession>
<accession>D6W067</accession>
<evidence type="ECO:0000255" key="1"/>
<evidence type="ECO:0000255" key="2">
    <source>
        <dbReference type="PROSITE-ProRule" id="PRU00282"/>
    </source>
</evidence>
<evidence type="ECO:0000269" key="3">
    <source>
    </source>
</evidence>
<evidence type="ECO:0000269" key="4">
    <source>
    </source>
</evidence>
<evidence type="ECO:0000269" key="5">
    <source>
    </source>
</evidence>
<evidence type="ECO:0000269" key="6">
    <source>
    </source>
</evidence>
<evidence type="ECO:0000269" key="7">
    <source>
    </source>
</evidence>
<evidence type="ECO:0000303" key="8">
    <source>
    </source>
</evidence>
<evidence type="ECO:0000303" key="9">
    <source>
    </source>
</evidence>
<evidence type="ECO:0000305" key="10"/>
<feature type="chain" id="PRO_0000090688" description="Citrate/oxoglutarate carrier protein">
    <location>
        <begin position="1"/>
        <end position="314"/>
    </location>
</feature>
<feature type="transmembrane region" description="Helical; Name=1" evidence="1">
    <location>
        <begin position="23"/>
        <end position="44"/>
    </location>
</feature>
<feature type="transmembrane region" description="Helical; Name=2" evidence="1">
    <location>
        <begin position="77"/>
        <end position="97"/>
    </location>
</feature>
<feature type="transmembrane region" description="Helical; Name=3" evidence="1">
    <location>
        <begin position="111"/>
        <end position="127"/>
    </location>
</feature>
<feature type="transmembrane region" description="Helical; Name=4" evidence="1">
    <location>
        <begin position="178"/>
        <end position="198"/>
    </location>
</feature>
<feature type="transmembrane region" description="Helical; Name=5" evidence="1">
    <location>
        <begin position="218"/>
        <end position="238"/>
    </location>
</feature>
<feature type="transmembrane region" description="Helical; Name=6" evidence="1">
    <location>
        <begin position="273"/>
        <end position="294"/>
    </location>
</feature>
<feature type="repeat" description="Solcar 1" evidence="2">
    <location>
        <begin position="18"/>
        <end position="100"/>
    </location>
</feature>
<feature type="repeat" description="Solcar 2" evidence="2">
    <location>
        <begin position="107"/>
        <end position="199"/>
    </location>
</feature>
<feature type="repeat" description="Solcar 3" evidence="2">
    <location>
        <begin position="217"/>
        <end position="301"/>
    </location>
</feature>
<feature type="DNA-binding region" evidence="7">
    <location>
        <begin position="246"/>
        <end position="259"/>
    </location>
</feature>
<feature type="mutagenesis site" description="Fails to bind DNA in vitro." evidence="7">
    <original>PNRPK</original>
    <variation>GGGGG</variation>
    <location>
        <begin position="249"/>
        <end position="253"/>
    </location>
</feature>
<name>YHM2_YEAST</name>